<comment type="catalytic activity">
    <reaction evidence="2">
        <text>a plastoquinone + NADH + (n+1) H(+)(in) = a plastoquinol + NAD(+) + n H(+)(out)</text>
        <dbReference type="Rhea" id="RHEA:42608"/>
        <dbReference type="Rhea" id="RHEA-COMP:9561"/>
        <dbReference type="Rhea" id="RHEA-COMP:9562"/>
        <dbReference type="ChEBI" id="CHEBI:15378"/>
        <dbReference type="ChEBI" id="CHEBI:17757"/>
        <dbReference type="ChEBI" id="CHEBI:57540"/>
        <dbReference type="ChEBI" id="CHEBI:57945"/>
        <dbReference type="ChEBI" id="CHEBI:62192"/>
    </reaction>
</comment>
<comment type="catalytic activity">
    <reaction evidence="2">
        <text>a plastoquinone + NADPH + (n+1) H(+)(in) = a plastoquinol + NADP(+) + n H(+)(out)</text>
        <dbReference type="Rhea" id="RHEA:42612"/>
        <dbReference type="Rhea" id="RHEA-COMP:9561"/>
        <dbReference type="Rhea" id="RHEA-COMP:9562"/>
        <dbReference type="ChEBI" id="CHEBI:15378"/>
        <dbReference type="ChEBI" id="CHEBI:17757"/>
        <dbReference type="ChEBI" id="CHEBI:57783"/>
        <dbReference type="ChEBI" id="CHEBI:58349"/>
        <dbReference type="ChEBI" id="CHEBI:62192"/>
    </reaction>
</comment>
<comment type="subcellular location">
    <subcellularLocation>
        <location evidence="2">Plastid</location>
        <location evidence="2">Chloroplast thylakoid membrane</location>
        <topology evidence="2">Multi-pass membrane protein</topology>
    </subcellularLocation>
</comment>
<comment type="RNA editing">
    <location>
        <position position="1" evidence="1"/>
    </location>
    <text evidence="1">The initiator methionine is created by RNA editing.</text>
</comment>
<comment type="similarity">
    <text evidence="2">Belongs to the complex I subunit 4 family.</text>
</comment>
<geneLocation type="chloroplast"/>
<reference key="1">
    <citation type="journal article" date="2006" name="Plant Cell Rep.">
        <title>The complete chloroplast genome sequences of Solanum tuberosum and comparative analysis with Solanaceae species identified the presence of a 241-bp deletion in cultivated potato chloroplast DNA sequence.</title>
        <authorList>
            <person name="Chung H.-J."/>
            <person name="Jung J.D."/>
            <person name="Park H.-W."/>
            <person name="Kim J.-H."/>
            <person name="Cha H.W."/>
            <person name="Min S.R."/>
            <person name="Jeong W.-J."/>
            <person name="Liu J.R."/>
        </authorList>
    </citation>
    <scope>NUCLEOTIDE SEQUENCE [LARGE SCALE GENOMIC DNA]</scope>
    <source>
        <strain>cv. Desiree</strain>
    </source>
</reference>
<reference key="2">
    <citation type="submission" date="2006-02" db="EMBL/GenBank/DDBJ databases">
        <title>Complete chloroplast genome sequences of Solanum tuberosum cultivar Desiree and comparative analyses with other Solanaceae genomes.</title>
        <authorList>
            <person name="Gargano D."/>
            <person name="Scotti N."/>
            <person name="Vezzi A."/>
            <person name="Bilardi A."/>
            <person name="Valle G."/>
            <person name="Grillo S."/>
            <person name="Cardi T."/>
        </authorList>
    </citation>
    <scope>NUCLEOTIDE SEQUENCE [LARGE SCALE GENOMIC DNA]</scope>
    <source>
        <strain>cv. Desiree</strain>
    </source>
</reference>
<proteinExistence type="inferred from homology"/>
<feature type="chain" id="PRO_0000275921" description="NAD(P)H-quinone oxidoreductase chain 4, chloroplastic">
    <location>
        <begin position="1"/>
        <end position="500"/>
    </location>
</feature>
<feature type="transmembrane region" description="Helical" evidence="2">
    <location>
        <begin position="4"/>
        <end position="24"/>
    </location>
</feature>
<feature type="transmembrane region" description="Helical" evidence="2">
    <location>
        <begin position="35"/>
        <end position="55"/>
    </location>
</feature>
<feature type="transmembrane region" description="Helical" evidence="2">
    <location>
        <begin position="87"/>
        <end position="107"/>
    </location>
</feature>
<feature type="transmembrane region" description="Helical" evidence="2">
    <location>
        <begin position="134"/>
        <end position="154"/>
    </location>
</feature>
<feature type="transmembrane region" description="Helical" evidence="2">
    <location>
        <begin position="167"/>
        <end position="187"/>
    </location>
</feature>
<feature type="transmembrane region" description="Helical" evidence="2">
    <location>
        <begin position="208"/>
        <end position="228"/>
    </location>
</feature>
<feature type="transmembrane region" description="Helical" evidence="2">
    <location>
        <begin position="242"/>
        <end position="262"/>
    </location>
</feature>
<feature type="transmembrane region" description="Helical" evidence="2">
    <location>
        <begin position="272"/>
        <end position="292"/>
    </location>
</feature>
<feature type="transmembrane region" description="Helical" evidence="2">
    <location>
        <begin position="305"/>
        <end position="325"/>
    </location>
</feature>
<feature type="transmembrane region" description="Helical" evidence="2">
    <location>
        <begin position="330"/>
        <end position="350"/>
    </location>
</feature>
<feature type="transmembrane region" description="Helical" evidence="2">
    <location>
        <begin position="386"/>
        <end position="406"/>
    </location>
</feature>
<feature type="transmembrane region" description="Helical" evidence="2">
    <location>
        <begin position="411"/>
        <end position="431"/>
    </location>
</feature>
<feature type="transmembrane region" description="Helical" evidence="2">
    <location>
        <begin position="462"/>
        <end position="482"/>
    </location>
</feature>
<feature type="sequence conflict" description="In Ref. 2; ABD47107." evidence="3" ref="2">
    <original>P</original>
    <variation>S</variation>
    <location>
        <position position="308"/>
    </location>
</feature>
<organism>
    <name type="scientific">Solanum tuberosum</name>
    <name type="common">Potato</name>
    <dbReference type="NCBI Taxonomy" id="4113"/>
    <lineage>
        <taxon>Eukaryota</taxon>
        <taxon>Viridiplantae</taxon>
        <taxon>Streptophyta</taxon>
        <taxon>Embryophyta</taxon>
        <taxon>Tracheophyta</taxon>
        <taxon>Spermatophyta</taxon>
        <taxon>Magnoliopsida</taxon>
        <taxon>eudicotyledons</taxon>
        <taxon>Gunneridae</taxon>
        <taxon>Pentapetalae</taxon>
        <taxon>asterids</taxon>
        <taxon>lamiids</taxon>
        <taxon>Solanales</taxon>
        <taxon>Solanaceae</taxon>
        <taxon>Solanoideae</taxon>
        <taxon>Solaneae</taxon>
        <taxon>Solanum</taxon>
    </lineage>
</organism>
<name>NU4C_SOLTU</name>
<keyword id="KW-0150">Chloroplast</keyword>
<keyword id="KW-0472">Membrane</keyword>
<keyword id="KW-0520">NAD</keyword>
<keyword id="KW-0521">NADP</keyword>
<keyword id="KW-0934">Plastid</keyword>
<keyword id="KW-0618">Plastoquinone</keyword>
<keyword id="KW-0874">Quinone</keyword>
<keyword id="KW-1185">Reference proteome</keyword>
<keyword id="KW-0691">RNA editing</keyword>
<keyword id="KW-0793">Thylakoid</keyword>
<keyword id="KW-1278">Translocase</keyword>
<keyword id="KW-0812">Transmembrane</keyword>
<keyword id="KW-1133">Transmembrane helix</keyword>
<accession>Q2VED0</accession>
<accession>Q27RZ9</accession>
<gene>
    <name evidence="2" type="primary">ndhD</name>
</gene>
<sequence>MNYFPWLTIIVVFPIFAGSLIFFLPHKGNRVIRWYTICICILELLLTTYAFCYHFQSDDPLIQLVEDYKWIDFFDFHWRLGIDGLSIGPILLTGFITTLATLAAWPVTRDSRLFHFLMLAMYSGQIGSFSSRDLLLFFIMWELELIPVYLLLAMWGGKKRLYSATKFILYTAGGSVFLLMGVLGVALYGSNEPTLNFETSVNQSYPVVLEIIFYIGFFIAFAVKSPIIPLHTWLPDTHGEAHYSTCMLLAGILLKMGAYGLIRINMELLPHAHSIFSPWLMIIGTIQIIYAASTSLGQRNLKKRIAYPSVSHMGFIIIGISSLTDTGLNGALLQIISHGFIGAALFFLAGTTYDRIRLVYLDEMGGIAIPMPKMFTMFSSFSMASLALPGMSGFVAELIVFFGIITGQKYLLIPKLLITFVMAIGIILTPIYSLSMPRQMFYGYKLFNAPKDSFFDSGPRELFLSISIFLPVIGIGIYPDFVLSLAVDKVEVILSNFFYR</sequence>
<protein>
    <recommendedName>
        <fullName evidence="2">NAD(P)H-quinone oxidoreductase chain 4, chloroplastic</fullName>
        <ecNumber evidence="2">7.1.1.-</ecNumber>
    </recommendedName>
    <alternativeName>
        <fullName evidence="2">NAD(P)H dehydrogenase, chain 4</fullName>
    </alternativeName>
    <alternativeName>
        <fullName evidence="2">NADH-plastoquinone oxidoreductase chain 4</fullName>
    </alternativeName>
</protein>
<evidence type="ECO:0000250" key="1"/>
<evidence type="ECO:0000255" key="2">
    <source>
        <dbReference type="HAMAP-Rule" id="MF_00491"/>
    </source>
</evidence>
<evidence type="ECO:0000305" key="3"/>
<dbReference type="EC" id="7.1.1.-" evidence="2"/>
<dbReference type="EMBL" id="DQ231562">
    <property type="protein sequence ID" value="ABB90088.1"/>
    <property type="molecule type" value="Genomic_DNA"/>
</dbReference>
<dbReference type="EMBL" id="DQ386163">
    <property type="protein sequence ID" value="ABD47107.1"/>
    <property type="status" value="ALT_SEQ"/>
    <property type="molecule type" value="Genomic_DNA"/>
</dbReference>
<dbReference type="RefSeq" id="YP_635689.2">
    <property type="nucleotide sequence ID" value="NC_008096.2"/>
</dbReference>
<dbReference type="SMR" id="Q2VED0"/>
<dbReference type="FunCoup" id="Q2VED0">
    <property type="interactions" value="7"/>
</dbReference>
<dbReference type="STRING" id="4113.Q2VED0"/>
<dbReference type="PaxDb" id="4113-PGSC0003DMT400029491"/>
<dbReference type="GeneID" id="4099905"/>
<dbReference type="KEGG" id="sot:4099905"/>
<dbReference type="eggNOG" id="KOG4845">
    <property type="taxonomic scope" value="Eukaryota"/>
</dbReference>
<dbReference type="InParanoid" id="Q2VED0"/>
<dbReference type="OrthoDB" id="564260at2759"/>
<dbReference type="Proteomes" id="UP000011115">
    <property type="component" value="Unassembled WGS sequence"/>
</dbReference>
<dbReference type="ExpressionAtlas" id="Q2VED0">
    <property type="expression patterns" value="baseline and differential"/>
</dbReference>
<dbReference type="GO" id="GO:0009535">
    <property type="term" value="C:chloroplast thylakoid membrane"/>
    <property type="evidence" value="ECO:0007669"/>
    <property type="project" value="UniProtKB-SubCell"/>
</dbReference>
<dbReference type="GO" id="GO:0008137">
    <property type="term" value="F:NADH dehydrogenase (ubiquinone) activity"/>
    <property type="evidence" value="ECO:0007669"/>
    <property type="project" value="InterPro"/>
</dbReference>
<dbReference type="GO" id="GO:0048039">
    <property type="term" value="F:ubiquinone binding"/>
    <property type="evidence" value="ECO:0000318"/>
    <property type="project" value="GO_Central"/>
</dbReference>
<dbReference type="GO" id="GO:0009060">
    <property type="term" value="P:aerobic respiration"/>
    <property type="evidence" value="ECO:0000318"/>
    <property type="project" value="GO_Central"/>
</dbReference>
<dbReference type="GO" id="GO:0042773">
    <property type="term" value="P:ATP synthesis coupled electron transport"/>
    <property type="evidence" value="ECO:0007669"/>
    <property type="project" value="InterPro"/>
</dbReference>
<dbReference type="GO" id="GO:0015990">
    <property type="term" value="P:electron transport coupled proton transport"/>
    <property type="evidence" value="ECO:0000318"/>
    <property type="project" value="GO_Central"/>
</dbReference>
<dbReference type="HAMAP" id="MF_00491">
    <property type="entry name" value="NDH1_NuoM"/>
    <property type="match status" value="1"/>
</dbReference>
<dbReference type="InterPro" id="IPR022997">
    <property type="entry name" value="NADH_Q_OxRdtase_chain4"/>
</dbReference>
<dbReference type="InterPro" id="IPR010227">
    <property type="entry name" value="NADH_Q_OxRdtase_chainM/4"/>
</dbReference>
<dbReference type="InterPro" id="IPR003918">
    <property type="entry name" value="NADH_UbQ_OxRdtase"/>
</dbReference>
<dbReference type="InterPro" id="IPR001750">
    <property type="entry name" value="ND/Mrp_TM"/>
</dbReference>
<dbReference type="NCBIfam" id="TIGR01972">
    <property type="entry name" value="NDH_I_M"/>
    <property type="match status" value="1"/>
</dbReference>
<dbReference type="PANTHER" id="PTHR43507:SF21">
    <property type="entry name" value="NAD(P)H-QUINONE OXIDOREDUCTASE CHAIN 4, CHLOROPLASTIC"/>
    <property type="match status" value="1"/>
</dbReference>
<dbReference type="PANTHER" id="PTHR43507">
    <property type="entry name" value="NADH-UBIQUINONE OXIDOREDUCTASE CHAIN 4"/>
    <property type="match status" value="1"/>
</dbReference>
<dbReference type="Pfam" id="PF00361">
    <property type="entry name" value="Proton_antipo_M"/>
    <property type="match status" value="1"/>
</dbReference>
<dbReference type="PRINTS" id="PR01437">
    <property type="entry name" value="NUOXDRDTASE4"/>
</dbReference>